<keyword id="KW-0067">ATP-binding</keyword>
<keyword id="KW-0436">Ligase</keyword>
<keyword id="KW-0460">Magnesium</keyword>
<keyword id="KW-0464">Manganese</keyword>
<keyword id="KW-0479">Metal-binding</keyword>
<keyword id="KW-0547">Nucleotide-binding</keyword>
<keyword id="KW-0658">Purine biosynthesis</keyword>
<keyword id="KW-1185">Reference proteome</keyword>
<feature type="chain" id="PRO_0000151462" description="Phosphoribosylamine--glycine ligase">
    <location>
        <begin position="1"/>
        <end position="420"/>
    </location>
</feature>
<feature type="domain" description="ATP-grasp" evidence="2">
    <location>
        <begin position="108"/>
        <end position="314"/>
    </location>
</feature>
<feature type="binding site" evidence="2">
    <location>
        <begin position="134"/>
        <end position="195"/>
    </location>
    <ligand>
        <name>ATP</name>
        <dbReference type="ChEBI" id="CHEBI:30616"/>
    </ligand>
</feature>
<feature type="binding site" evidence="2">
    <location>
        <position position="284"/>
    </location>
    <ligand>
        <name>Mg(2+)</name>
        <dbReference type="ChEBI" id="CHEBI:18420"/>
    </ligand>
</feature>
<feature type="binding site" evidence="2">
    <location>
        <position position="286"/>
    </location>
    <ligand>
        <name>Mg(2+)</name>
        <dbReference type="ChEBI" id="CHEBI:18420"/>
    </ligand>
</feature>
<comment type="catalytic activity">
    <reaction evidence="2">
        <text>5-phospho-beta-D-ribosylamine + glycine + ATP = N(1)-(5-phospho-beta-D-ribosyl)glycinamide + ADP + phosphate + H(+)</text>
        <dbReference type="Rhea" id="RHEA:17453"/>
        <dbReference type="ChEBI" id="CHEBI:15378"/>
        <dbReference type="ChEBI" id="CHEBI:30616"/>
        <dbReference type="ChEBI" id="CHEBI:43474"/>
        <dbReference type="ChEBI" id="CHEBI:57305"/>
        <dbReference type="ChEBI" id="CHEBI:58681"/>
        <dbReference type="ChEBI" id="CHEBI:143788"/>
        <dbReference type="ChEBI" id="CHEBI:456216"/>
        <dbReference type="EC" id="6.3.4.13"/>
    </reaction>
</comment>
<comment type="cofactor">
    <cofactor evidence="1">
        <name>Mg(2+)</name>
        <dbReference type="ChEBI" id="CHEBI:18420"/>
    </cofactor>
    <cofactor evidence="1">
        <name>Mn(2+)</name>
        <dbReference type="ChEBI" id="CHEBI:29035"/>
    </cofactor>
    <text evidence="1">Binds 1 Mg(2+) or Mn(2+) ion per subunit.</text>
</comment>
<comment type="pathway">
    <text evidence="2">Purine metabolism; IMP biosynthesis via de novo pathway; N(1)-(5-phospho-D-ribosyl)glycinamide from 5-phospho-alpha-D-ribose 1-diphosphate: step 2/2.</text>
</comment>
<comment type="similarity">
    <text evidence="2">Belongs to the GARS family.</text>
</comment>
<name>PUR2_LISMO</name>
<accession>Q8Y6C6</accession>
<dbReference type="EC" id="6.3.4.13" evidence="2"/>
<dbReference type="EMBL" id="AL591981">
    <property type="protein sequence ID" value="CAC99842.1"/>
    <property type="molecule type" value="Genomic_DNA"/>
</dbReference>
<dbReference type="PIR" id="AD1295">
    <property type="entry name" value="AD1295"/>
</dbReference>
<dbReference type="RefSeq" id="NP_465289.1">
    <property type="nucleotide sequence ID" value="NC_003210.1"/>
</dbReference>
<dbReference type="RefSeq" id="WP_010989806.1">
    <property type="nucleotide sequence ID" value="NZ_CP149495.1"/>
</dbReference>
<dbReference type="SMR" id="Q8Y6C6"/>
<dbReference type="STRING" id="169963.gene:17594446"/>
<dbReference type="PaxDb" id="169963-lmo1764"/>
<dbReference type="EnsemblBacteria" id="CAC99842">
    <property type="protein sequence ID" value="CAC99842"/>
    <property type="gene ID" value="CAC99842"/>
</dbReference>
<dbReference type="GeneID" id="985980"/>
<dbReference type="KEGG" id="lmo:lmo1764"/>
<dbReference type="PATRIC" id="fig|169963.11.peg.1808"/>
<dbReference type="eggNOG" id="COG0151">
    <property type="taxonomic scope" value="Bacteria"/>
</dbReference>
<dbReference type="HOGENOM" id="CLU_027420_3_1_9"/>
<dbReference type="OrthoDB" id="9807240at2"/>
<dbReference type="PhylomeDB" id="Q8Y6C6"/>
<dbReference type="BioCyc" id="LMON169963:LMO1764-MONOMER"/>
<dbReference type="UniPathway" id="UPA00074">
    <property type="reaction ID" value="UER00125"/>
</dbReference>
<dbReference type="Proteomes" id="UP000000817">
    <property type="component" value="Chromosome"/>
</dbReference>
<dbReference type="GO" id="GO:0005524">
    <property type="term" value="F:ATP binding"/>
    <property type="evidence" value="ECO:0007669"/>
    <property type="project" value="UniProtKB-KW"/>
</dbReference>
<dbReference type="GO" id="GO:0046872">
    <property type="term" value="F:metal ion binding"/>
    <property type="evidence" value="ECO:0007669"/>
    <property type="project" value="UniProtKB-KW"/>
</dbReference>
<dbReference type="GO" id="GO:0004637">
    <property type="term" value="F:phosphoribosylamine-glycine ligase activity"/>
    <property type="evidence" value="ECO:0007669"/>
    <property type="project" value="UniProtKB-UniRule"/>
</dbReference>
<dbReference type="GO" id="GO:0006189">
    <property type="term" value="P:'de novo' IMP biosynthetic process"/>
    <property type="evidence" value="ECO:0007669"/>
    <property type="project" value="UniProtKB-UniRule"/>
</dbReference>
<dbReference type="GO" id="GO:0009113">
    <property type="term" value="P:purine nucleobase biosynthetic process"/>
    <property type="evidence" value="ECO:0007669"/>
    <property type="project" value="InterPro"/>
</dbReference>
<dbReference type="FunFam" id="3.30.1490.20:FF:000006">
    <property type="entry name" value="phosphoribosylamine--glycine ligase, chloroplastic-like"/>
    <property type="match status" value="1"/>
</dbReference>
<dbReference type="FunFam" id="3.30.470.20:FF:000018">
    <property type="entry name" value="Trifunctional purine biosynthetic protein adenosine-3"/>
    <property type="match status" value="1"/>
</dbReference>
<dbReference type="Gene3D" id="3.40.50.20">
    <property type="match status" value="1"/>
</dbReference>
<dbReference type="Gene3D" id="3.30.1490.20">
    <property type="entry name" value="ATP-grasp fold, A domain"/>
    <property type="match status" value="1"/>
</dbReference>
<dbReference type="Gene3D" id="3.30.470.20">
    <property type="entry name" value="ATP-grasp fold, B domain"/>
    <property type="match status" value="1"/>
</dbReference>
<dbReference type="Gene3D" id="3.90.600.10">
    <property type="entry name" value="Phosphoribosylglycinamide synthetase, C-terminal domain"/>
    <property type="match status" value="1"/>
</dbReference>
<dbReference type="HAMAP" id="MF_00138">
    <property type="entry name" value="GARS"/>
    <property type="match status" value="1"/>
</dbReference>
<dbReference type="InterPro" id="IPR011761">
    <property type="entry name" value="ATP-grasp"/>
</dbReference>
<dbReference type="InterPro" id="IPR013815">
    <property type="entry name" value="ATP_grasp_subdomain_1"/>
</dbReference>
<dbReference type="InterPro" id="IPR016185">
    <property type="entry name" value="PreATP-grasp_dom_sf"/>
</dbReference>
<dbReference type="InterPro" id="IPR020561">
    <property type="entry name" value="PRibGlycinamid_synth_ATP-grasp"/>
</dbReference>
<dbReference type="InterPro" id="IPR000115">
    <property type="entry name" value="PRibGlycinamide_synth"/>
</dbReference>
<dbReference type="InterPro" id="IPR020560">
    <property type="entry name" value="PRibGlycinamide_synth_C-dom"/>
</dbReference>
<dbReference type="InterPro" id="IPR037123">
    <property type="entry name" value="PRibGlycinamide_synth_C_sf"/>
</dbReference>
<dbReference type="InterPro" id="IPR020559">
    <property type="entry name" value="PRibGlycinamide_synth_CS"/>
</dbReference>
<dbReference type="InterPro" id="IPR020562">
    <property type="entry name" value="PRibGlycinamide_synth_N"/>
</dbReference>
<dbReference type="InterPro" id="IPR011054">
    <property type="entry name" value="Rudment_hybrid_motif"/>
</dbReference>
<dbReference type="NCBIfam" id="TIGR00877">
    <property type="entry name" value="purD"/>
    <property type="match status" value="1"/>
</dbReference>
<dbReference type="PANTHER" id="PTHR43472">
    <property type="entry name" value="PHOSPHORIBOSYLAMINE--GLYCINE LIGASE"/>
    <property type="match status" value="1"/>
</dbReference>
<dbReference type="PANTHER" id="PTHR43472:SF1">
    <property type="entry name" value="PHOSPHORIBOSYLAMINE--GLYCINE LIGASE, CHLOROPLASTIC"/>
    <property type="match status" value="1"/>
</dbReference>
<dbReference type="Pfam" id="PF01071">
    <property type="entry name" value="GARS_A"/>
    <property type="match status" value="1"/>
</dbReference>
<dbReference type="Pfam" id="PF02843">
    <property type="entry name" value="GARS_C"/>
    <property type="match status" value="1"/>
</dbReference>
<dbReference type="Pfam" id="PF02844">
    <property type="entry name" value="GARS_N"/>
    <property type="match status" value="1"/>
</dbReference>
<dbReference type="SMART" id="SM01209">
    <property type="entry name" value="GARS_A"/>
    <property type="match status" value="1"/>
</dbReference>
<dbReference type="SMART" id="SM01210">
    <property type="entry name" value="GARS_C"/>
    <property type="match status" value="1"/>
</dbReference>
<dbReference type="SUPFAM" id="SSF56059">
    <property type="entry name" value="Glutathione synthetase ATP-binding domain-like"/>
    <property type="match status" value="1"/>
</dbReference>
<dbReference type="SUPFAM" id="SSF52440">
    <property type="entry name" value="PreATP-grasp domain"/>
    <property type="match status" value="1"/>
</dbReference>
<dbReference type="SUPFAM" id="SSF51246">
    <property type="entry name" value="Rudiment single hybrid motif"/>
    <property type="match status" value="1"/>
</dbReference>
<dbReference type="PROSITE" id="PS50975">
    <property type="entry name" value="ATP_GRASP"/>
    <property type="match status" value="1"/>
</dbReference>
<dbReference type="PROSITE" id="PS00184">
    <property type="entry name" value="GARS"/>
    <property type="match status" value="1"/>
</dbReference>
<protein>
    <recommendedName>
        <fullName evidence="2">Phosphoribosylamine--glycine ligase</fullName>
        <ecNumber evidence="2">6.3.4.13</ecNumber>
    </recommendedName>
    <alternativeName>
        <fullName evidence="2">GARS</fullName>
    </alternativeName>
    <alternativeName>
        <fullName evidence="2">Glycinamide ribonucleotide synthetase</fullName>
    </alternativeName>
    <alternativeName>
        <fullName evidence="2">Phosphoribosylglycinamide synthetase</fullName>
    </alternativeName>
</protein>
<evidence type="ECO:0000250" key="1"/>
<evidence type="ECO:0000255" key="2">
    <source>
        <dbReference type="HAMAP-Rule" id="MF_00138"/>
    </source>
</evidence>
<gene>
    <name evidence="2" type="primary">purD</name>
    <name type="ordered locus">lmo1764</name>
</gene>
<organism>
    <name type="scientific">Listeria monocytogenes serovar 1/2a (strain ATCC BAA-679 / EGD-e)</name>
    <dbReference type="NCBI Taxonomy" id="169963"/>
    <lineage>
        <taxon>Bacteria</taxon>
        <taxon>Bacillati</taxon>
        <taxon>Bacillota</taxon>
        <taxon>Bacilli</taxon>
        <taxon>Bacillales</taxon>
        <taxon>Listeriaceae</taxon>
        <taxon>Listeria</taxon>
    </lineage>
</organism>
<proteinExistence type="inferred from homology"/>
<reference key="1">
    <citation type="journal article" date="2001" name="Science">
        <title>Comparative genomics of Listeria species.</title>
        <authorList>
            <person name="Glaser P."/>
            <person name="Frangeul L."/>
            <person name="Buchrieser C."/>
            <person name="Rusniok C."/>
            <person name="Amend A."/>
            <person name="Baquero F."/>
            <person name="Berche P."/>
            <person name="Bloecker H."/>
            <person name="Brandt P."/>
            <person name="Chakraborty T."/>
            <person name="Charbit A."/>
            <person name="Chetouani F."/>
            <person name="Couve E."/>
            <person name="de Daruvar A."/>
            <person name="Dehoux P."/>
            <person name="Domann E."/>
            <person name="Dominguez-Bernal G."/>
            <person name="Duchaud E."/>
            <person name="Durant L."/>
            <person name="Dussurget O."/>
            <person name="Entian K.-D."/>
            <person name="Fsihi H."/>
            <person name="Garcia-del Portillo F."/>
            <person name="Garrido P."/>
            <person name="Gautier L."/>
            <person name="Goebel W."/>
            <person name="Gomez-Lopez N."/>
            <person name="Hain T."/>
            <person name="Hauf J."/>
            <person name="Jackson D."/>
            <person name="Jones L.-M."/>
            <person name="Kaerst U."/>
            <person name="Kreft J."/>
            <person name="Kuhn M."/>
            <person name="Kunst F."/>
            <person name="Kurapkat G."/>
            <person name="Madueno E."/>
            <person name="Maitournam A."/>
            <person name="Mata Vicente J."/>
            <person name="Ng E."/>
            <person name="Nedjari H."/>
            <person name="Nordsiek G."/>
            <person name="Novella S."/>
            <person name="de Pablos B."/>
            <person name="Perez-Diaz J.-C."/>
            <person name="Purcell R."/>
            <person name="Remmel B."/>
            <person name="Rose M."/>
            <person name="Schlueter T."/>
            <person name="Simoes N."/>
            <person name="Tierrez A."/>
            <person name="Vazquez-Boland J.-A."/>
            <person name="Voss H."/>
            <person name="Wehland J."/>
            <person name="Cossart P."/>
        </authorList>
    </citation>
    <scope>NUCLEOTIDE SEQUENCE [LARGE SCALE GENOMIC DNA]</scope>
    <source>
        <strain>ATCC BAA-679 / EGD-e</strain>
    </source>
</reference>
<sequence>MNLLVVGSGGREHAISKKLLASNNVEKVFCAPGNDGMRLDDIQLVAISETDKAGLIDFAKKAEIAFVIVGPEVPLLEGVVDALEEAGIKAFGPKANAALIEGSKDFAKQFMEKYAIPTAASRTFTDYAEAKAYLNERGVPIVIKADGLAAGKGVTVALEMEEAVLALKDMMLEEKFGDASLKVVIEDFLAGEEFSLMAFVNGEEVYPMSIAQDHKRAYEGDKGPNTGGMGAYSPVPHISEAVIEEAVQKILLPTAKGMVKEGRYFRGILYAGLILTADGPKVIEFNARFGDPETQVVLPRLESDFAALIDALLHNEKPDVRFKKTGLTLGVVLASAGYPEHYEKGNKLTGLNDIAEDVAIYHAGTKQDENGDFISDGGRVLLLAKEAETMSDARTLLYPEMQKLDNPNFFYRIDIGTKAE</sequence>